<reference evidence="8" key="1">
    <citation type="submission" date="1998-04" db="EMBL/GenBank/DDBJ databases">
        <title>The High Mobility Group Proteins of Caenorhabditis elegans.</title>
        <authorList>
            <person name="Kurz T."/>
            <person name="Schulze E."/>
        </authorList>
    </citation>
    <scope>NUCLEOTIDE SEQUENCE [MRNA]</scope>
    <source>
        <strain evidence="8">Bristol N2</strain>
    </source>
</reference>
<reference evidence="9" key="2">
    <citation type="journal article" date="1998" name="Science">
        <title>Genome sequence of the nematode C. elegans: a platform for investigating biology.</title>
        <authorList>
            <consortium name="The C. elegans sequencing consortium"/>
        </authorList>
    </citation>
    <scope>NUCLEOTIDE SEQUENCE [LARGE SCALE GENOMIC DNA]</scope>
    <source>
        <strain evidence="9">Bristol N2</strain>
    </source>
</reference>
<reference evidence="6" key="3">
    <citation type="journal article" date="2008" name="Dev. Biol.">
        <title>Involvement of HMG-12 and CAR-1 in the cdc-48.1 expression of Caenorhabditis elegans.</title>
        <authorList>
            <person name="Yamauchi S."/>
            <person name="Higashitani N."/>
            <person name="Otani M."/>
            <person name="Higashitani A."/>
            <person name="Ogura T."/>
            <person name="Yamanaka K."/>
        </authorList>
    </citation>
    <scope>FUNCTION</scope>
    <scope>SUBCELLULAR LOCATION</scope>
    <scope>DISRUPTION PHENOTYPE</scope>
    <scope>IDENTIFICATION BY MASS SPECTROMETRY</scope>
</reference>
<accession>G5EDQ2</accession>
<keyword id="KW-0238">DNA-binding</keyword>
<keyword id="KW-0539">Nucleus</keyword>
<keyword id="KW-1185">Reference proteome</keyword>
<keyword id="KW-0804">Transcription</keyword>
<keyword id="KW-0805">Transcription regulation</keyword>
<sequence length="315" mass="33004">MSDVAEEKAEFLVIRTYGSESFRKECADLIEKELHKLNATIARVPVGEFVAYAENAVKNETDSEAVGSSSVKRENSANDSPANTNDVDIVSSPVKRGRGRKAKNPSADADVNDTGSSPVKKGRGRPIKNPSADAGSPLVKKGRGRRAQTPAADTDAIDTASSPVKKGRGRPAKNPSADAGSPLVKKGRGRQAKNLAADTDAIDTASSPVKKGRGRPLKKTAAEADVNGLGSPSANRITGCPPSTKVSNQSSPPEPAVNESEEADEPVLKRGRSVKQPKDESESDDEDAEKAPAAIPKKRGRPGKSAIDAFFDGSD</sequence>
<proteinExistence type="evidence at protein level"/>
<name>HMG12_CAEEL</name>
<gene>
    <name evidence="10" type="primary">hmg-12</name>
    <name evidence="8" type="synonym">hmg-I-beta</name>
    <name evidence="10" type="ORF">Y17G7A.1</name>
</gene>
<feature type="chain" id="PRO_0000456799" description="High mobility group protein hmg-12">
    <location>
        <begin position="1"/>
        <end position="315"/>
    </location>
</feature>
<feature type="DNA-binding region" description="A.T hook 1" evidence="1">
    <location>
        <begin position="118"/>
        <end position="128"/>
    </location>
</feature>
<feature type="region of interest" description="Disordered" evidence="3">
    <location>
        <begin position="57"/>
        <end position="315"/>
    </location>
</feature>
<feature type="compositionally biased region" description="Polar residues" evidence="3">
    <location>
        <begin position="77"/>
        <end position="86"/>
    </location>
</feature>
<feature type="compositionally biased region" description="Low complexity" evidence="3">
    <location>
        <begin position="147"/>
        <end position="160"/>
    </location>
</feature>
<feature type="compositionally biased region" description="Low complexity" evidence="3">
    <location>
        <begin position="196"/>
        <end position="205"/>
    </location>
</feature>
<evidence type="ECO:0000250" key="1">
    <source>
        <dbReference type="UniProtKB" id="P52926"/>
    </source>
</evidence>
<evidence type="ECO:0000250" key="2">
    <source>
        <dbReference type="UniProtKB" id="P52927"/>
    </source>
</evidence>
<evidence type="ECO:0000256" key="3">
    <source>
        <dbReference type="SAM" id="MobiDB-lite"/>
    </source>
</evidence>
<evidence type="ECO:0000269" key="4">
    <source>
    </source>
</evidence>
<evidence type="ECO:0000303" key="5">
    <source>
    </source>
</evidence>
<evidence type="ECO:0000305" key="6"/>
<evidence type="ECO:0000305" key="7">
    <source>
    </source>
</evidence>
<evidence type="ECO:0000312" key="8">
    <source>
        <dbReference type="EMBL" id="AAC78601.1"/>
    </source>
</evidence>
<evidence type="ECO:0000312" key="9">
    <source>
        <dbReference type="Proteomes" id="UP000001940"/>
    </source>
</evidence>
<evidence type="ECO:0000312" key="10">
    <source>
        <dbReference type="WormBase" id="Y17G7A.1"/>
    </source>
</evidence>
<protein>
    <recommendedName>
        <fullName evidence="5">High mobility group protein hmg-12</fullName>
    </recommendedName>
    <alternativeName>
        <fullName evidence="2">High mobility group AT-hook protein hmg-12</fullName>
    </alternativeName>
    <alternativeName>
        <fullName evidence="8">High mobility group protein I beta</fullName>
    </alternativeName>
</protein>
<dbReference type="EMBL" id="AF056579">
    <property type="protein sequence ID" value="AAC78601.1"/>
    <property type="molecule type" value="mRNA"/>
</dbReference>
<dbReference type="EMBL" id="BX284602">
    <property type="protein sequence ID" value="CAA15962.1"/>
    <property type="molecule type" value="Genomic_DNA"/>
</dbReference>
<dbReference type="PIR" id="T43029">
    <property type="entry name" value="T43029"/>
</dbReference>
<dbReference type="RefSeq" id="NP_496544.1">
    <property type="nucleotide sequence ID" value="NM_064143.8"/>
</dbReference>
<dbReference type="FunCoup" id="G5EDQ2">
    <property type="interactions" value="544"/>
</dbReference>
<dbReference type="STRING" id="6239.Y17G7A.1.1"/>
<dbReference type="PaxDb" id="6239-Y17G7A.1.1"/>
<dbReference type="PeptideAtlas" id="G5EDQ2"/>
<dbReference type="EnsemblMetazoa" id="Y17G7A.1.1">
    <property type="protein sequence ID" value="Y17G7A.1.1"/>
    <property type="gene ID" value="WBGene00001977"/>
</dbReference>
<dbReference type="GeneID" id="174829"/>
<dbReference type="KEGG" id="cel:CELE_Y17G7A.1"/>
<dbReference type="AGR" id="WB:WBGene00001977"/>
<dbReference type="CTD" id="174829"/>
<dbReference type="WormBase" id="Y17G7A.1">
    <property type="protein sequence ID" value="CE21378"/>
    <property type="gene ID" value="WBGene00001977"/>
    <property type="gene designation" value="hmg-12"/>
</dbReference>
<dbReference type="HOGENOM" id="CLU_883478_0_0_1"/>
<dbReference type="InParanoid" id="G5EDQ2"/>
<dbReference type="Reactome" id="R-CEL-2559584">
    <property type="pathway name" value="Formation of Senescence-Associated Heterochromatin Foci (SAHF)"/>
</dbReference>
<dbReference type="PRO" id="PR:G5EDQ2"/>
<dbReference type="Proteomes" id="UP000001940">
    <property type="component" value="Chromosome II"/>
</dbReference>
<dbReference type="Bgee" id="WBGene00001977">
    <property type="expression patterns" value="Expressed in germ line (C elegans) and 4 other cell types or tissues"/>
</dbReference>
<dbReference type="GO" id="GO:0005634">
    <property type="term" value="C:nucleus"/>
    <property type="evidence" value="ECO:0000318"/>
    <property type="project" value="GO_Central"/>
</dbReference>
<dbReference type="GO" id="GO:0000979">
    <property type="term" value="F:RNA polymerase II core promoter sequence-specific DNA binding"/>
    <property type="evidence" value="ECO:0000314"/>
    <property type="project" value="UniProtKB"/>
</dbReference>
<dbReference type="GO" id="GO:0003712">
    <property type="term" value="F:transcription coregulator activity"/>
    <property type="evidence" value="ECO:0000318"/>
    <property type="project" value="GO_Central"/>
</dbReference>
<dbReference type="GO" id="GO:0010628">
    <property type="term" value="P:positive regulation of gene expression"/>
    <property type="evidence" value="ECO:0000315"/>
    <property type="project" value="UniProtKB"/>
</dbReference>
<dbReference type="GO" id="GO:0006355">
    <property type="term" value="P:regulation of DNA-templated transcription"/>
    <property type="evidence" value="ECO:0000318"/>
    <property type="project" value="GO_Central"/>
</dbReference>
<dbReference type="InterPro" id="IPR017956">
    <property type="entry name" value="AT_hook_DNA-bd_motif"/>
</dbReference>
<dbReference type="PANTHER" id="PTHR23341:SF2">
    <property type="entry name" value="HIGH MOBILITY GROUP PROTEIN HMG-12"/>
    <property type="match status" value="1"/>
</dbReference>
<dbReference type="PANTHER" id="PTHR23341">
    <property type="entry name" value="HIGH MOBILITY GROUP PROTEINS HMG-A AND C"/>
    <property type="match status" value="1"/>
</dbReference>
<dbReference type="PRINTS" id="PR00929">
    <property type="entry name" value="ATHOOK"/>
</dbReference>
<dbReference type="SMART" id="SM00384">
    <property type="entry name" value="AT_hook"/>
    <property type="match status" value="7"/>
</dbReference>
<comment type="function">
    <text evidence="4">Transcriptional regulator (PubMed:18430416). Binds to specific sequence motifs in regulatory elements (PubMed:18430416). May recruit transcription factors, or may induce structural changes in chromatin, to thereby modulate embryonic expression of ATP-dependent chaperone cdc-48.1 (PubMed:18430416).</text>
</comment>
<comment type="subcellular location">
    <subcellularLocation>
        <location evidence="7">Nucleus</location>
    </subcellularLocation>
</comment>
<comment type="disruption phenotype">
    <text evidence="4">RNAi-mediated knockdown significantly reduces protein levels of ATP-dependent chaperones cdc-48.1 and cdc-48.2 in embryos.</text>
</comment>
<comment type="similarity">
    <text evidence="6">Belongs to the HMGA family.</text>
</comment>
<organism evidence="9">
    <name type="scientific">Caenorhabditis elegans</name>
    <dbReference type="NCBI Taxonomy" id="6239"/>
    <lineage>
        <taxon>Eukaryota</taxon>
        <taxon>Metazoa</taxon>
        <taxon>Ecdysozoa</taxon>
        <taxon>Nematoda</taxon>
        <taxon>Chromadorea</taxon>
        <taxon>Rhabditida</taxon>
        <taxon>Rhabditina</taxon>
        <taxon>Rhabditomorpha</taxon>
        <taxon>Rhabditoidea</taxon>
        <taxon>Rhabditidae</taxon>
        <taxon>Peloderinae</taxon>
        <taxon>Caenorhabditis</taxon>
    </lineage>
</organism>